<keyword id="KW-0067">ATP-binding</keyword>
<keyword id="KW-0418">Kinase</keyword>
<keyword id="KW-0460">Magnesium</keyword>
<keyword id="KW-0479">Metal-binding</keyword>
<keyword id="KW-0547">Nucleotide-binding</keyword>
<keyword id="KW-1185">Reference proteome</keyword>
<keyword id="KW-0784">Thiamine biosynthesis</keyword>
<keyword id="KW-0808">Transferase</keyword>
<dbReference type="EC" id="2.7.1.50" evidence="1"/>
<dbReference type="EMBL" id="BA000043">
    <property type="protein sequence ID" value="BAD75794.1"/>
    <property type="molecule type" value="Genomic_DNA"/>
</dbReference>
<dbReference type="RefSeq" id="WP_011231005.1">
    <property type="nucleotide sequence ID" value="NC_006510.1"/>
</dbReference>
<dbReference type="SMR" id="Q5KZU2"/>
<dbReference type="STRING" id="235909.GK1509"/>
<dbReference type="KEGG" id="gka:GK1509"/>
<dbReference type="eggNOG" id="COG2145">
    <property type="taxonomic scope" value="Bacteria"/>
</dbReference>
<dbReference type="HOGENOM" id="CLU_019943_0_1_9"/>
<dbReference type="UniPathway" id="UPA00060">
    <property type="reaction ID" value="UER00139"/>
</dbReference>
<dbReference type="Proteomes" id="UP000001172">
    <property type="component" value="Chromosome"/>
</dbReference>
<dbReference type="GO" id="GO:0005524">
    <property type="term" value="F:ATP binding"/>
    <property type="evidence" value="ECO:0007669"/>
    <property type="project" value="UniProtKB-UniRule"/>
</dbReference>
<dbReference type="GO" id="GO:0004417">
    <property type="term" value="F:hydroxyethylthiazole kinase activity"/>
    <property type="evidence" value="ECO:0007669"/>
    <property type="project" value="UniProtKB-UniRule"/>
</dbReference>
<dbReference type="GO" id="GO:0000287">
    <property type="term" value="F:magnesium ion binding"/>
    <property type="evidence" value="ECO:0007669"/>
    <property type="project" value="UniProtKB-UniRule"/>
</dbReference>
<dbReference type="GO" id="GO:0009228">
    <property type="term" value="P:thiamine biosynthetic process"/>
    <property type="evidence" value="ECO:0007669"/>
    <property type="project" value="UniProtKB-KW"/>
</dbReference>
<dbReference type="GO" id="GO:0009229">
    <property type="term" value="P:thiamine diphosphate biosynthetic process"/>
    <property type="evidence" value="ECO:0007669"/>
    <property type="project" value="UniProtKB-UniRule"/>
</dbReference>
<dbReference type="CDD" id="cd01170">
    <property type="entry name" value="THZ_kinase"/>
    <property type="match status" value="1"/>
</dbReference>
<dbReference type="Gene3D" id="3.40.1190.20">
    <property type="match status" value="1"/>
</dbReference>
<dbReference type="HAMAP" id="MF_00228">
    <property type="entry name" value="Thz_kinase"/>
    <property type="match status" value="1"/>
</dbReference>
<dbReference type="InterPro" id="IPR000417">
    <property type="entry name" value="Hyethyz_kinase"/>
</dbReference>
<dbReference type="InterPro" id="IPR029056">
    <property type="entry name" value="Ribokinase-like"/>
</dbReference>
<dbReference type="NCBIfam" id="NF006830">
    <property type="entry name" value="PRK09355.1"/>
    <property type="match status" value="1"/>
</dbReference>
<dbReference type="NCBIfam" id="TIGR00694">
    <property type="entry name" value="thiM"/>
    <property type="match status" value="1"/>
</dbReference>
<dbReference type="Pfam" id="PF02110">
    <property type="entry name" value="HK"/>
    <property type="match status" value="1"/>
</dbReference>
<dbReference type="PIRSF" id="PIRSF000513">
    <property type="entry name" value="Thz_kinase"/>
    <property type="match status" value="1"/>
</dbReference>
<dbReference type="PRINTS" id="PR01099">
    <property type="entry name" value="HYETHTZKNASE"/>
</dbReference>
<dbReference type="SUPFAM" id="SSF53613">
    <property type="entry name" value="Ribokinase-like"/>
    <property type="match status" value="1"/>
</dbReference>
<gene>
    <name evidence="1" type="primary">thiM</name>
    <name type="ordered locus">GK1509</name>
</gene>
<evidence type="ECO:0000255" key="1">
    <source>
        <dbReference type="HAMAP-Rule" id="MF_00228"/>
    </source>
</evidence>
<reference key="1">
    <citation type="journal article" date="2004" name="Nucleic Acids Res.">
        <title>Thermoadaptation trait revealed by the genome sequence of thermophilic Geobacillus kaustophilus.</title>
        <authorList>
            <person name="Takami H."/>
            <person name="Takaki Y."/>
            <person name="Chee G.-J."/>
            <person name="Nishi S."/>
            <person name="Shimamura S."/>
            <person name="Suzuki H."/>
            <person name="Matsui S."/>
            <person name="Uchiyama I."/>
        </authorList>
    </citation>
    <scope>NUCLEOTIDE SEQUENCE [LARGE SCALE GENOMIC DNA]</scope>
    <source>
        <strain>HTA426</strain>
    </source>
</reference>
<accession>Q5KZU2</accession>
<organism>
    <name type="scientific">Geobacillus kaustophilus (strain HTA426)</name>
    <dbReference type="NCBI Taxonomy" id="235909"/>
    <lineage>
        <taxon>Bacteria</taxon>
        <taxon>Bacillati</taxon>
        <taxon>Bacillota</taxon>
        <taxon>Bacilli</taxon>
        <taxon>Bacillales</taxon>
        <taxon>Anoxybacillaceae</taxon>
        <taxon>Geobacillus</taxon>
        <taxon>Geobacillus thermoleovorans group</taxon>
    </lineage>
</organism>
<name>THIM_GEOKA</name>
<protein>
    <recommendedName>
        <fullName evidence="1">Hydroxyethylthiazole kinase</fullName>
        <ecNumber evidence="1">2.7.1.50</ecNumber>
    </recommendedName>
    <alternativeName>
        <fullName evidence="1">4-methyl-5-beta-hydroxyethylthiazole kinase</fullName>
        <shortName evidence="1">TH kinase</shortName>
        <shortName evidence="1">Thz kinase</shortName>
    </alternativeName>
</protein>
<proteinExistence type="inferred from homology"/>
<sequence>MANWHEWAELLERVREENPLVHNITNVVVTNWTANGLLALGASPVMAYAKEEVGEMAKLAGALVLNIGTLNDKEVEAMLVAGQAANEAGVPVIFDPVGAGATRYRTETARRIAEQVKLAVIRGNAAEIANMIGEAWTIKGVDAGGGSGDRVALAKRAAEQLGAVVAITGKEDVVADGQTTYLIQNGHPLLTKVTGAGCLLTSVIGAFAAVERDAAAAAVAALVYYGVAAEQAAAKAGERGPGSFQTAFLDALAYTSVDDVKRHGRVEQR</sequence>
<comment type="function">
    <text evidence="1">Catalyzes the phosphorylation of the hydroxyl group of 4-methyl-5-beta-hydroxyethylthiazole (THZ).</text>
</comment>
<comment type="catalytic activity">
    <reaction evidence="1">
        <text>5-(2-hydroxyethyl)-4-methylthiazole + ATP = 4-methyl-5-(2-phosphooxyethyl)-thiazole + ADP + H(+)</text>
        <dbReference type="Rhea" id="RHEA:24212"/>
        <dbReference type="ChEBI" id="CHEBI:15378"/>
        <dbReference type="ChEBI" id="CHEBI:17957"/>
        <dbReference type="ChEBI" id="CHEBI:30616"/>
        <dbReference type="ChEBI" id="CHEBI:58296"/>
        <dbReference type="ChEBI" id="CHEBI:456216"/>
        <dbReference type="EC" id="2.7.1.50"/>
    </reaction>
</comment>
<comment type="cofactor">
    <cofactor evidence="1">
        <name>Mg(2+)</name>
        <dbReference type="ChEBI" id="CHEBI:18420"/>
    </cofactor>
</comment>
<comment type="pathway">
    <text evidence="1">Cofactor biosynthesis; thiamine diphosphate biosynthesis; 4-methyl-5-(2-phosphoethyl)-thiazole from 5-(2-hydroxyethyl)-4-methylthiazole: step 1/1.</text>
</comment>
<comment type="similarity">
    <text evidence="1">Belongs to the Thz kinase family.</text>
</comment>
<feature type="chain" id="PRO_0000336556" description="Hydroxyethylthiazole kinase">
    <location>
        <begin position="1"/>
        <end position="269"/>
    </location>
</feature>
<feature type="binding site" evidence="1">
    <location>
        <position position="46"/>
    </location>
    <ligand>
        <name>substrate</name>
    </ligand>
</feature>
<feature type="binding site" evidence="1">
    <location>
        <position position="122"/>
    </location>
    <ligand>
        <name>ATP</name>
        <dbReference type="ChEBI" id="CHEBI:30616"/>
    </ligand>
</feature>
<feature type="binding site" evidence="1">
    <location>
        <position position="168"/>
    </location>
    <ligand>
        <name>ATP</name>
        <dbReference type="ChEBI" id="CHEBI:30616"/>
    </ligand>
</feature>
<feature type="binding site" evidence="1">
    <location>
        <position position="195"/>
    </location>
    <ligand>
        <name>substrate</name>
    </ligand>
</feature>